<feature type="chain" id="PRO_0000103977" description="Uncharacterized protein Rv2209">
    <location>
        <begin position="1"/>
        <end position="512"/>
    </location>
</feature>
<feature type="transmembrane region" description="Helical" evidence="1">
    <location>
        <begin position="25"/>
        <end position="45"/>
    </location>
</feature>
<feature type="transmembrane region" description="Helical" evidence="1">
    <location>
        <begin position="55"/>
        <end position="75"/>
    </location>
</feature>
<feature type="transmembrane region" description="Helical" evidence="1">
    <location>
        <begin position="96"/>
        <end position="116"/>
    </location>
</feature>
<feature type="transmembrane region" description="Helical" evidence="1">
    <location>
        <begin position="123"/>
        <end position="143"/>
    </location>
</feature>
<feature type="transmembrane region" description="Helical" evidence="1">
    <location>
        <begin position="148"/>
        <end position="168"/>
    </location>
</feature>
<feature type="transmembrane region" description="Helical" evidence="1">
    <location>
        <begin position="183"/>
        <end position="203"/>
    </location>
</feature>
<feature type="transmembrane region" description="Helical" evidence="1">
    <location>
        <begin position="238"/>
        <end position="258"/>
    </location>
</feature>
<feature type="transmembrane region" description="Helical" evidence="1">
    <location>
        <begin position="263"/>
        <end position="283"/>
    </location>
</feature>
<feature type="transmembrane region" description="Helical" evidence="1">
    <location>
        <begin position="294"/>
        <end position="314"/>
    </location>
</feature>
<feature type="transmembrane region" description="Helical" evidence="1">
    <location>
        <begin position="329"/>
        <end position="349"/>
    </location>
</feature>
<feature type="transmembrane region" description="Helical" evidence="1">
    <location>
        <begin position="359"/>
        <end position="379"/>
    </location>
</feature>
<feature type="transmembrane region" description="Helical" evidence="1">
    <location>
        <begin position="386"/>
        <end position="406"/>
    </location>
</feature>
<feature type="region of interest" description="Disordered" evidence="2">
    <location>
        <begin position="428"/>
        <end position="512"/>
    </location>
</feature>
<name>Y2209_MYCTU</name>
<gene>
    <name type="ordered locus">Rv2209</name>
    <name type="ORF">MTCY190.20</name>
</gene>
<accession>P9WLI3</accession>
<accession>L0TBT9</accession>
<accession>P64953</accession>
<accession>Q10398</accession>
<reference key="1">
    <citation type="journal article" date="1998" name="Nature">
        <title>Deciphering the biology of Mycobacterium tuberculosis from the complete genome sequence.</title>
        <authorList>
            <person name="Cole S.T."/>
            <person name="Brosch R."/>
            <person name="Parkhill J."/>
            <person name="Garnier T."/>
            <person name="Churcher C.M."/>
            <person name="Harris D.E."/>
            <person name="Gordon S.V."/>
            <person name="Eiglmeier K."/>
            <person name="Gas S."/>
            <person name="Barry C.E. III"/>
            <person name="Tekaia F."/>
            <person name="Badcock K."/>
            <person name="Basham D."/>
            <person name="Brown D."/>
            <person name="Chillingworth T."/>
            <person name="Connor R."/>
            <person name="Davies R.M."/>
            <person name="Devlin K."/>
            <person name="Feltwell T."/>
            <person name="Gentles S."/>
            <person name="Hamlin N."/>
            <person name="Holroyd S."/>
            <person name="Hornsby T."/>
            <person name="Jagels K."/>
            <person name="Krogh A."/>
            <person name="McLean J."/>
            <person name="Moule S."/>
            <person name="Murphy L.D."/>
            <person name="Oliver S."/>
            <person name="Osborne J."/>
            <person name="Quail M.A."/>
            <person name="Rajandream M.A."/>
            <person name="Rogers J."/>
            <person name="Rutter S."/>
            <person name="Seeger K."/>
            <person name="Skelton S."/>
            <person name="Squares S."/>
            <person name="Squares R."/>
            <person name="Sulston J.E."/>
            <person name="Taylor K."/>
            <person name="Whitehead S."/>
            <person name="Barrell B.G."/>
        </authorList>
    </citation>
    <scope>NUCLEOTIDE SEQUENCE [LARGE SCALE GENOMIC DNA]</scope>
    <source>
        <strain>ATCC 25618 / H37Rv</strain>
    </source>
</reference>
<organism>
    <name type="scientific">Mycobacterium tuberculosis (strain ATCC 25618 / H37Rv)</name>
    <dbReference type="NCBI Taxonomy" id="83332"/>
    <lineage>
        <taxon>Bacteria</taxon>
        <taxon>Bacillati</taxon>
        <taxon>Actinomycetota</taxon>
        <taxon>Actinomycetes</taxon>
        <taxon>Mycobacteriales</taxon>
        <taxon>Mycobacteriaceae</taxon>
        <taxon>Mycobacterium</taxon>
        <taxon>Mycobacterium tuberculosis complex</taxon>
    </lineage>
</organism>
<keyword id="KW-1003">Cell membrane</keyword>
<keyword id="KW-0472">Membrane</keyword>
<keyword id="KW-1185">Reference proteome</keyword>
<keyword id="KW-0812">Transmembrane</keyword>
<keyword id="KW-1133">Transmembrane helix</keyword>
<protein>
    <recommendedName>
        <fullName>Uncharacterized protein Rv2209</fullName>
    </recommendedName>
</protein>
<dbReference type="EMBL" id="AL123456">
    <property type="protein sequence ID" value="CCP44986.1"/>
    <property type="molecule type" value="Genomic_DNA"/>
</dbReference>
<dbReference type="PIR" id="B70786">
    <property type="entry name" value="B70786"/>
</dbReference>
<dbReference type="RefSeq" id="NP_216725.1">
    <property type="nucleotide sequence ID" value="NC_000962.3"/>
</dbReference>
<dbReference type="RefSeq" id="WP_003899218.1">
    <property type="nucleotide sequence ID" value="NZ_NVQJ01000008.1"/>
</dbReference>
<dbReference type="SMR" id="P9WLI3"/>
<dbReference type="STRING" id="83332.Rv2209"/>
<dbReference type="PaxDb" id="83332-Rv2209"/>
<dbReference type="DNASU" id="887230"/>
<dbReference type="GeneID" id="887230"/>
<dbReference type="KEGG" id="mtu:Rv2209"/>
<dbReference type="KEGG" id="mtv:RVBD_2209"/>
<dbReference type="TubercuList" id="Rv2209"/>
<dbReference type="eggNOG" id="COG2814">
    <property type="taxonomic scope" value="Bacteria"/>
</dbReference>
<dbReference type="InParanoid" id="P9WLI3"/>
<dbReference type="OrthoDB" id="4703698at2"/>
<dbReference type="PhylomeDB" id="P9WLI3"/>
<dbReference type="Proteomes" id="UP000001584">
    <property type="component" value="Chromosome"/>
</dbReference>
<dbReference type="GO" id="GO:0005886">
    <property type="term" value="C:plasma membrane"/>
    <property type="evidence" value="ECO:0007669"/>
    <property type="project" value="UniProtKB-SubCell"/>
</dbReference>
<dbReference type="Gene3D" id="1.20.1250.20">
    <property type="entry name" value="MFS general substrate transporter like domains"/>
    <property type="match status" value="1"/>
</dbReference>
<dbReference type="InterPro" id="IPR036259">
    <property type="entry name" value="MFS_trans_sf"/>
</dbReference>
<dbReference type="SUPFAM" id="SSF103473">
    <property type="entry name" value="MFS general substrate transporter"/>
    <property type="match status" value="1"/>
</dbReference>
<comment type="subcellular location">
    <subcellularLocation>
        <location evidence="3">Cell membrane</location>
        <topology evidence="3">Multi-pass membrane protein</topology>
    </subcellularLocation>
</comment>
<evidence type="ECO:0000255" key="1"/>
<evidence type="ECO:0000256" key="2">
    <source>
        <dbReference type="SAM" id="MobiDB-lite"/>
    </source>
</evidence>
<evidence type="ECO:0000305" key="3"/>
<sequence length="512" mass="53579">MPASRLVRQVSAPRNLFGRLVAQGGFYTAGLQLGSGAVVLPVICAHQGLTWAAGLLYPAFCIGAILGNSLSPLILQRAGQLRHLLMAAISATAAALVVCNAAVPWTGVGVAAVFLATTGAGGVVTGVSSVAYTDMISSMLPAVRRGELLLTQGAAGSVLATGVTLVIVPMLAHGNEMARYHDLLWLGAAGLVCSGIAALFVGPMRSVSVTTATRMPLREIYWMGFAIARSQPWFRRYMTTYLLFVPISLGTTFFSLRAAQSNGSLHVLVILSSIGLVVGSMLWRQINRLFGVRGLLLGSALLNAAAALLCMVAESCGQWVHAWAYGTAFLLATVAAQTVVAASISWISVLAPERYRATLICVGSTLAAVEATVLGVALGGIAQKHATIWPVVVVLTLAVIAAVASLRAPTRIGVTADTSPQAATLQAYRPATPNPIHSDERSTPPDHLSVRRGQLRHVWDSRRPAPPLNRPSCRRAARRPAPGKPAAALPQPRHPAVGVREGAPLDAGQRIA</sequence>
<proteinExistence type="predicted"/>